<keyword id="KW-0963">Cytoplasm</keyword>
<keyword id="KW-0444">Lipid biosynthesis</keyword>
<keyword id="KW-0443">Lipid metabolism</keyword>
<keyword id="KW-0520">NAD</keyword>
<keyword id="KW-0521">NADP</keyword>
<keyword id="KW-0547">Nucleotide-binding</keyword>
<keyword id="KW-0560">Oxidoreductase</keyword>
<keyword id="KW-0594">Phospholipid biosynthesis</keyword>
<keyword id="KW-1208">Phospholipid metabolism</keyword>
<keyword id="KW-1185">Reference proteome</keyword>
<feature type="chain" id="PRO_0000255316" description="Glycerol-3-phosphate dehydrogenase [NAD(P)+]">
    <location>
        <begin position="1"/>
        <end position="335"/>
    </location>
</feature>
<feature type="active site" description="Proton acceptor" evidence="1">
    <location>
        <position position="193"/>
    </location>
</feature>
<feature type="binding site" evidence="1">
    <location>
        <position position="12"/>
    </location>
    <ligand>
        <name>NADPH</name>
        <dbReference type="ChEBI" id="CHEBI:57783"/>
    </ligand>
</feature>
<feature type="binding site" evidence="1">
    <location>
        <position position="13"/>
    </location>
    <ligand>
        <name>NADPH</name>
        <dbReference type="ChEBI" id="CHEBI:57783"/>
    </ligand>
</feature>
<feature type="binding site" evidence="1">
    <location>
        <position position="107"/>
    </location>
    <ligand>
        <name>NADPH</name>
        <dbReference type="ChEBI" id="CHEBI:57783"/>
    </ligand>
</feature>
<feature type="binding site" evidence="1">
    <location>
        <position position="107"/>
    </location>
    <ligand>
        <name>sn-glycerol 3-phosphate</name>
        <dbReference type="ChEBI" id="CHEBI:57597"/>
    </ligand>
</feature>
<feature type="binding site" evidence="1">
    <location>
        <position position="138"/>
    </location>
    <ligand>
        <name>sn-glycerol 3-phosphate</name>
        <dbReference type="ChEBI" id="CHEBI:57597"/>
    </ligand>
</feature>
<feature type="binding site" evidence="1">
    <location>
        <position position="140"/>
    </location>
    <ligand>
        <name>sn-glycerol 3-phosphate</name>
        <dbReference type="ChEBI" id="CHEBI:57597"/>
    </ligand>
</feature>
<feature type="binding site" evidence="1">
    <location>
        <position position="142"/>
    </location>
    <ligand>
        <name>NADPH</name>
        <dbReference type="ChEBI" id="CHEBI:57783"/>
    </ligand>
</feature>
<feature type="binding site" evidence="1">
    <location>
        <position position="193"/>
    </location>
    <ligand>
        <name>sn-glycerol 3-phosphate</name>
        <dbReference type="ChEBI" id="CHEBI:57597"/>
    </ligand>
</feature>
<feature type="binding site" evidence="1">
    <location>
        <position position="246"/>
    </location>
    <ligand>
        <name>sn-glycerol 3-phosphate</name>
        <dbReference type="ChEBI" id="CHEBI:57597"/>
    </ligand>
</feature>
<feature type="binding site" evidence="1">
    <location>
        <position position="256"/>
    </location>
    <ligand>
        <name>sn-glycerol 3-phosphate</name>
        <dbReference type="ChEBI" id="CHEBI:57597"/>
    </ligand>
</feature>
<feature type="binding site" evidence="1">
    <location>
        <position position="257"/>
    </location>
    <ligand>
        <name>NADPH</name>
        <dbReference type="ChEBI" id="CHEBI:57783"/>
    </ligand>
</feature>
<feature type="binding site" evidence="1">
    <location>
        <position position="257"/>
    </location>
    <ligand>
        <name>sn-glycerol 3-phosphate</name>
        <dbReference type="ChEBI" id="CHEBI:57597"/>
    </ligand>
</feature>
<feature type="binding site" evidence="1">
    <location>
        <position position="258"/>
    </location>
    <ligand>
        <name>sn-glycerol 3-phosphate</name>
        <dbReference type="ChEBI" id="CHEBI:57597"/>
    </ligand>
</feature>
<feature type="binding site" evidence="1">
    <location>
        <position position="281"/>
    </location>
    <ligand>
        <name>NADPH</name>
        <dbReference type="ChEBI" id="CHEBI:57783"/>
    </ligand>
</feature>
<feature type="binding site" evidence="1">
    <location>
        <position position="283"/>
    </location>
    <ligand>
        <name>NADPH</name>
        <dbReference type="ChEBI" id="CHEBI:57783"/>
    </ligand>
</feature>
<accession>Q39ZR6</accession>
<organism>
    <name type="scientific">Geobacter metallireducens (strain ATCC 53774 / DSM 7210 / GS-15)</name>
    <dbReference type="NCBI Taxonomy" id="269799"/>
    <lineage>
        <taxon>Bacteria</taxon>
        <taxon>Pseudomonadati</taxon>
        <taxon>Thermodesulfobacteriota</taxon>
        <taxon>Desulfuromonadia</taxon>
        <taxon>Geobacterales</taxon>
        <taxon>Geobacteraceae</taxon>
        <taxon>Geobacter</taxon>
    </lineage>
</organism>
<comment type="function">
    <text evidence="1">Catalyzes the reduction of the glycolytic intermediate dihydroxyacetone phosphate (DHAP) to sn-glycerol 3-phosphate (G3P), the key precursor for phospholipid synthesis.</text>
</comment>
<comment type="catalytic activity">
    <reaction evidence="1">
        <text>sn-glycerol 3-phosphate + NAD(+) = dihydroxyacetone phosphate + NADH + H(+)</text>
        <dbReference type="Rhea" id="RHEA:11092"/>
        <dbReference type="ChEBI" id="CHEBI:15378"/>
        <dbReference type="ChEBI" id="CHEBI:57540"/>
        <dbReference type="ChEBI" id="CHEBI:57597"/>
        <dbReference type="ChEBI" id="CHEBI:57642"/>
        <dbReference type="ChEBI" id="CHEBI:57945"/>
        <dbReference type="EC" id="1.1.1.94"/>
    </reaction>
    <physiologicalReaction direction="right-to-left" evidence="1">
        <dbReference type="Rhea" id="RHEA:11094"/>
    </physiologicalReaction>
</comment>
<comment type="catalytic activity">
    <reaction evidence="1">
        <text>sn-glycerol 3-phosphate + NADP(+) = dihydroxyacetone phosphate + NADPH + H(+)</text>
        <dbReference type="Rhea" id="RHEA:11096"/>
        <dbReference type="ChEBI" id="CHEBI:15378"/>
        <dbReference type="ChEBI" id="CHEBI:57597"/>
        <dbReference type="ChEBI" id="CHEBI:57642"/>
        <dbReference type="ChEBI" id="CHEBI:57783"/>
        <dbReference type="ChEBI" id="CHEBI:58349"/>
        <dbReference type="EC" id="1.1.1.94"/>
    </reaction>
    <physiologicalReaction direction="right-to-left" evidence="1">
        <dbReference type="Rhea" id="RHEA:11098"/>
    </physiologicalReaction>
</comment>
<comment type="pathway">
    <text evidence="1">Membrane lipid metabolism; glycerophospholipid metabolism.</text>
</comment>
<comment type="subcellular location">
    <subcellularLocation>
        <location evidence="1">Cytoplasm</location>
    </subcellularLocation>
</comment>
<comment type="similarity">
    <text evidence="1">Belongs to the NAD-dependent glycerol-3-phosphate dehydrogenase family.</text>
</comment>
<gene>
    <name evidence="1" type="primary">gpsA</name>
    <name type="ordered locus">Gmet_0008</name>
</gene>
<proteinExistence type="inferred from homology"/>
<sequence length="335" mass="35175">MGEKIGVIGAGSWGTTLANLLAKKGLDVTLWAYEPELVAEMRATRVNTLFLPGTELAAGLAFTNSLEEAAAGKDVLVLVSPSQVMRSVLTQLAPLLKPGVTLVNASKGIELDTLMTMDQVCGAVLPPAVAGRFCVLSGPSFAREVAQEMPTAVVAASADLEAAAQVQRLFTAPYFRVYTNSDVVGVEIGGALKNVIALAAGISDGLGLGHNTRAALITRGLAEMNRLGRAMGADPATFAGLAGMGDLVLTCTGDLSRNRTVGMKLGQGMRLAEILGEMRMVAEGVKTAESAWRLASQMGVDMPITEKVYQVLYEDKPARQAVLELMTRDPKAERG</sequence>
<name>GPDA_GEOMG</name>
<reference key="1">
    <citation type="journal article" date="2009" name="BMC Microbiol.">
        <title>The genome sequence of Geobacter metallireducens: features of metabolism, physiology and regulation common and dissimilar to Geobacter sulfurreducens.</title>
        <authorList>
            <person name="Aklujkar M."/>
            <person name="Krushkal J."/>
            <person name="DiBartolo G."/>
            <person name="Lapidus A."/>
            <person name="Land M.L."/>
            <person name="Lovley D.R."/>
        </authorList>
    </citation>
    <scope>NUCLEOTIDE SEQUENCE [LARGE SCALE GENOMIC DNA]</scope>
    <source>
        <strain>ATCC 53774 / DSM 7210 / GS-15</strain>
    </source>
</reference>
<dbReference type="EC" id="1.1.1.94" evidence="1"/>
<dbReference type="EMBL" id="CP000148">
    <property type="protein sequence ID" value="ABB30258.1"/>
    <property type="molecule type" value="Genomic_DNA"/>
</dbReference>
<dbReference type="RefSeq" id="WP_004513773.1">
    <property type="nucleotide sequence ID" value="NC_007517.1"/>
</dbReference>
<dbReference type="SMR" id="Q39ZR6"/>
<dbReference type="STRING" id="269799.Gmet_0008"/>
<dbReference type="KEGG" id="gme:Gmet_0008"/>
<dbReference type="eggNOG" id="COG0240">
    <property type="taxonomic scope" value="Bacteria"/>
</dbReference>
<dbReference type="HOGENOM" id="CLU_033449_0_2_7"/>
<dbReference type="UniPathway" id="UPA00940"/>
<dbReference type="Proteomes" id="UP000007073">
    <property type="component" value="Chromosome"/>
</dbReference>
<dbReference type="GO" id="GO:0005829">
    <property type="term" value="C:cytosol"/>
    <property type="evidence" value="ECO:0007669"/>
    <property type="project" value="TreeGrafter"/>
</dbReference>
<dbReference type="GO" id="GO:0047952">
    <property type="term" value="F:glycerol-3-phosphate dehydrogenase [NAD(P)+] activity"/>
    <property type="evidence" value="ECO:0007669"/>
    <property type="project" value="UniProtKB-UniRule"/>
</dbReference>
<dbReference type="GO" id="GO:0051287">
    <property type="term" value="F:NAD binding"/>
    <property type="evidence" value="ECO:0007669"/>
    <property type="project" value="InterPro"/>
</dbReference>
<dbReference type="GO" id="GO:0005975">
    <property type="term" value="P:carbohydrate metabolic process"/>
    <property type="evidence" value="ECO:0007669"/>
    <property type="project" value="InterPro"/>
</dbReference>
<dbReference type="GO" id="GO:0046167">
    <property type="term" value="P:glycerol-3-phosphate biosynthetic process"/>
    <property type="evidence" value="ECO:0007669"/>
    <property type="project" value="UniProtKB-UniRule"/>
</dbReference>
<dbReference type="GO" id="GO:0046168">
    <property type="term" value="P:glycerol-3-phosphate catabolic process"/>
    <property type="evidence" value="ECO:0007669"/>
    <property type="project" value="InterPro"/>
</dbReference>
<dbReference type="GO" id="GO:0006650">
    <property type="term" value="P:glycerophospholipid metabolic process"/>
    <property type="evidence" value="ECO:0007669"/>
    <property type="project" value="UniProtKB-UniRule"/>
</dbReference>
<dbReference type="GO" id="GO:0008654">
    <property type="term" value="P:phospholipid biosynthetic process"/>
    <property type="evidence" value="ECO:0007669"/>
    <property type="project" value="UniProtKB-KW"/>
</dbReference>
<dbReference type="FunFam" id="1.10.1040.10:FF:000001">
    <property type="entry name" value="Glycerol-3-phosphate dehydrogenase [NAD(P)+]"/>
    <property type="match status" value="1"/>
</dbReference>
<dbReference type="FunFam" id="3.40.50.720:FF:000019">
    <property type="entry name" value="Glycerol-3-phosphate dehydrogenase [NAD(P)+]"/>
    <property type="match status" value="1"/>
</dbReference>
<dbReference type="Gene3D" id="1.10.1040.10">
    <property type="entry name" value="N-(1-d-carboxylethyl)-l-norvaline Dehydrogenase, domain 2"/>
    <property type="match status" value="1"/>
</dbReference>
<dbReference type="Gene3D" id="3.40.50.720">
    <property type="entry name" value="NAD(P)-binding Rossmann-like Domain"/>
    <property type="match status" value="1"/>
</dbReference>
<dbReference type="HAMAP" id="MF_00394">
    <property type="entry name" value="NAD_Glyc3P_dehydrog"/>
    <property type="match status" value="1"/>
</dbReference>
<dbReference type="InterPro" id="IPR008927">
    <property type="entry name" value="6-PGluconate_DH-like_C_sf"/>
</dbReference>
<dbReference type="InterPro" id="IPR013328">
    <property type="entry name" value="6PGD_dom2"/>
</dbReference>
<dbReference type="InterPro" id="IPR006168">
    <property type="entry name" value="G3P_DH_NAD-dep"/>
</dbReference>
<dbReference type="InterPro" id="IPR006109">
    <property type="entry name" value="G3P_DH_NAD-dep_C"/>
</dbReference>
<dbReference type="InterPro" id="IPR011128">
    <property type="entry name" value="G3P_DH_NAD-dep_N"/>
</dbReference>
<dbReference type="InterPro" id="IPR036291">
    <property type="entry name" value="NAD(P)-bd_dom_sf"/>
</dbReference>
<dbReference type="NCBIfam" id="NF000940">
    <property type="entry name" value="PRK00094.1-2"/>
    <property type="match status" value="1"/>
</dbReference>
<dbReference type="NCBIfam" id="NF000942">
    <property type="entry name" value="PRK00094.1-4"/>
    <property type="match status" value="1"/>
</dbReference>
<dbReference type="PANTHER" id="PTHR11728">
    <property type="entry name" value="GLYCEROL-3-PHOSPHATE DEHYDROGENASE"/>
    <property type="match status" value="1"/>
</dbReference>
<dbReference type="PANTHER" id="PTHR11728:SF1">
    <property type="entry name" value="GLYCEROL-3-PHOSPHATE DEHYDROGENASE [NAD(+)] 2, CHLOROPLASTIC"/>
    <property type="match status" value="1"/>
</dbReference>
<dbReference type="Pfam" id="PF07479">
    <property type="entry name" value="NAD_Gly3P_dh_C"/>
    <property type="match status" value="1"/>
</dbReference>
<dbReference type="Pfam" id="PF01210">
    <property type="entry name" value="NAD_Gly3P_dh_N"/>
    <property type="match status" value="1"/>
</dbReference>
<dbReference type="PIRSF" id="PIRSF000114">
    <property type="entry name" value="Glycerol-3-P_dh"/>
    <property type="match status" value="1"/>
</dbReference>
<dbReference type="PRINTS" id="PR00077">
    <property type="entry name" value="GPDHDRGNASE"/>
</dbReference>
<dbReference type="SUPFAM" id="SSF48179">
    <property type="entry name" value="6-phosphogluconate dehydrogenase C-terminal domain-like"/>
    <property type="match status" value="1"/>
</dbReference>
<dbReference type="SUPFAM" id="SSF51735">
    <property type="entry name" value="NAD(P)-binding Rossmann-fold domains"/>
    <property type="match status" value="1"/>
</dbReference>
<dbReference type="PROSITE" id="PS00957">
    <property type="entry name" value="NAD_G3PDH"/>
    <property type="match status" value="1"/>
</dbReference>
<evidence type="ECO:0000255" key="1">
    <source>
        <dbReference type="HAMAP-Rule" id="MF_00394"/>
    </source>
</evidence>
<protein>
    <recommendedName>
        <fullName evidence="1">Glycerol-3-phosphate dehydrogenase [NAD(P)+]</fullName>
        <ecNumber evidence="1">1.1.1.94</ecNumber>
    </recommendedName>
    <alternativeName>
        <fullName evidence="1">NAD(P)(+)-dependent glycerol-3-phosphate dehydrogenase</fullName>
    </alternativeName>
    <alternativeName>
        <fullName evidence="1">NAD(P)H-dependent dihydroxyacetone-phosphate reductase</fullName>
    </alternativeName>
</protein>